<organism>
    <name type="scientific">Orientia tsutsugamushi (strain Ikeda)</name>
    <name type="common">Rickettsia tsutsugamushi</name>
    <dbReference type="NCBI Taxonomy" id="334380"/>
    <lineage>
        <taxon>Bacteria</taxon>
        <taxon>Pseudomonadati</taxon>
        <taxon>Pseudomonadota</taxon>
        <taxon>Alphaproteobacteria</taxon>
        <taxon>Rickettsiales</taxon>
        <taxon>Rickettsiaceae</taxon>
        <taxon>Rickettsieae</taxon>
        <taxon>Orientia</taxon>
    </lineage>
</organism>
<sequence>MTENIDTANIDSMKHKTLKRTANRANKEVFFRRRKGCPLSAPDGTAPIITYKDPDLLSKFISECGRVLPARVTNVCRSKQRELTKAIKIARELALLPFVYHQ</sequence>
<gene>
    <name evidence="1" type="primary">rpsR</name>
    <name type="ordered locus">OTT_0797</name>
</gene>
<dbReference type="EMBL" id="AP008981">
    <property type="protein sequence ID" value="BAG40255.1"/>
    <property type="molecule type" value="Genomic_DNA"/>
</dbReference>
<dbReference type="SMR" id="B3CRZ8"/>
<dbReference type="KEGG" id="ott:OTT_0797"/>
<dbReference type="HOGENOM" id="CLU_148710_2_1_5"/>
<dbReference type="OrthoDB" id="9812008at2"/>
<dbReference type="Proteomes" id="UP000001033">
    <property type="component" value="Chromosome"/>
</dbReference>
<dbReference type="GO" id="GO:0022627">
    <property type="term" value="C:cytosolic small ribosomal subunit"/>
    <property type="evidence" value="ECO:0007669"/>
    <property type="project" value="TreeGrafter"/>
</dbReference>
<dbReference type="GO" id="GO:0070181">
    <property type="term" value="F:small ribosomal subunit rRNA binding"/>
    <property type="evidence" value="ECO:0007669"/>
    <property type="project" value="TreeGrafter"/>
</dbReference>
<dbReference type="GO" id="GO:0003735">
    <property type="term" value="F:structural constituent of ribosome"/>
    <property type="evidence" value="ECO:0007669"/>
    <property type="project" value="InterPro"/>
</dbReference>
<dbReference type="GO" id="GO:0006412">
    <property type="term" value="P:translation"/>
    <property type="evidence" value="ECO:0007669"/>
    <property type="project" value="UniProtKB-UniRule"/>
</dbReference>
<dbReference type="Gene3D" id="4.10.640.10">
    <property type="entry name" value="Ribosomal protein S18"/>
    <property type="match status" value="1"/>
</dbReference>
<dbReference type="HAMAP" id="MF_00270">
    <property type="entry name" value="Ribosomal_bS18"/>
    <property type="match status" value="1"/>
</dbReference>
<dbReference type="InterPro" id="IPR001648">
    <property type="entry name" value="Ribosomal_bS18"/>
</dbReference>
<dbReference type="InterPro" id="IPR036870">
    <property type="entry name" value="Ribosomal_bS18_sf"/>
</dbReference>
<dbReference type="NCBIfam" id="TIGR00165">
    <property type="entry name" value="S18"/>
    <property type="match status" value="1"/>
</dbReference>
<dbReference type="PANTHER" id="PTHR13479">
    <property type="entry name" value="30S RIBOSOMAL PROTEIN S18"/>
    <property type="match status" value="1"/>
</dbReference>
<dbReference type="PANTHER" id="PTHR13479:SF40">
    <property type="entry name" value="SMALL RIBOSOMAL SUBUNIT PROTEIN BS18M"/>
    <property type="match status" value="1"/>
</dbReference>
<dbReference type="Pfam" id="PF01084">
    <property type="entry name" value="Ribosomal_S18"/>
    <property type="match status" value="1"/>
</dbReference>
<dbReference type="PRINTS" id="PR00974">
    <property type="entry name" value="RIBOSOMALS18"/>
</dbReference>
<dbReference type="SUPFAM" id="SSF46911">
    <property type="entry name" value="Ribosomal protein S18"/>
    <property type="match status" value="1"/>
</dbReference>
<keyword id="KW-0687">Ribonucleoprotein</keyword>
<keyword id="KW-0689">Ribosomal protein</keyword>
<keyword id="KW-0694">RNA-binding</keyword>
<keyword id="KW-0699">rRNA-binding</keyword>
<evidence type="ECO:0000255" key="1">
    <source>
        <dbReference type="HAMAP-Rule" id="MF_00270"/>
    </source>
</evidence>
<evidence type="ECO:0000305" key="2"/>
<protein>
    <recommendedName>
        <fullName evidence="1">Small ribosomal subunit protein bS18</fullName>
    </recommendedName>
    <alternativeName>
        <fullName evidence="2">30S ribosomal protein S18</fullName>
    </alternativeName>
</protein>
<proteinExistence type="inferred from homology"/>
<accession>B3CRZ8</accession>
<comment type="function">
    <text evidence="1">Binds as a heterodimer with protein bS6 to the central domain of the 16S rRNA, where it helps stabilize the platform of the 30S subunit.</text>
</comment>
<comment type="subunit">
    <text evidence="1">Part of the 30S ribosomal subunit. Forms a tight heterodimer with protein bS6.</text>
</comment>
<comment type="similarity">
    <text evidence="1">Belongs to the bacterial ribosomal protein bS18 family.</text>
</comment>
<reference key="1">
    <citation type="journal article" date="2008" name="DNA Res.">
        <title>The whole-genome sequencing of the obligate intracellular bacterium Orientia tsutsugamushi revealed massive gene amplification during reductive genome evolution.</title>
        <authorList>
            <person name="Nakayama K."/>
            <person name="Yamashita A."/>
            <person name="Kurokawa K."/>
            <person name="Morimoto T."/>
            <person name="Ogawa M."/>
            <person name="Fukuhara M."/>
            <person name="Urakami H."/>
            <person name="Ohnishi M."/>
            <person name="Uchiyama I."/>
            <person name="Ogura Y."/>
            <person name="Ooka T."/>
            <person name="Oshima K."/>
            <person name="Tamura A."/>
            <person name="Hattori M."/>
            <person name="Hayashi T."/>
        </authorList>
    </citation>
    <scope>NUCLEOTIDE SEQUENCE [LARGE SCALE GENOMIC DNA]</scope>
    <source>
        <strain>Ikeda</strain>
    </source>
</reference>
<feature type="chain" id="PRO_1000114435" description="Small ribosomal subunit protein bS18">
    <location>
        <begin position="1"/>
        <end position="102"/>
    </location>
</feature>
<name>RS18_ORITI</name>